<gene>
    <name type="ordered locus">CA_C1241</name>
</gene>
<reference key="1">
    <citation type="journal article" date="2001" name="J. Bacteriol.">
        <title>Genome sequence and comparative analysis of the solvent-producing bacterium Clostridium acetobutylicum.</title>
        <authorList>
            <person name="Noelling J."/>
            <person name="Breton G."/>
            <person name="Omelchenko M.V."/>
            <person name="Makarova K.S."/>
            <person name="Zeng Q."/>
            <person name="Gibson R."/>
            <person name="Lee H.M."/>
            <person name="Dubois J."/>
            <person name="Qiu D."/>
            <person name="Hitti J."/>
            <person name="Wolf Y.I."/>
            <person name="Tatusov R.L."/>
            <person name="Sabathe F."/>
            <person name="Doucette-Stamm L.A."/>
            <person name="Soucaille P."/>
            <person name="Daly M.J."/>
            <person name="Bennett G.N."/>
            <person name="Koonin E.V."/>
            <person name="Smith D.R."/>
        </authorList>
    </citation>
    <scope>NUCLEOTIDE SEQUENCE [LARGE SCALE GENOMIC DNA]</scope>
    <source>
        <strain>ATCC 824 / DSM 792 / JCM 1419 / IAM 19013 / LMG 5710 / NBRC 13948 / NRRL B-527 / VKM B-1787 / 2291 / W</strain>
    </source>
</reference>
<accession>Q97JN2</accession>
<name>Y1241_CLOAB</name>
<comment type="similarity">
    <text evidence="2">Belongs to the UPF0758 family.</text>
</comment>
<evidence type="ECO:0000255" key="1">
    <source>
        <dbReference type="PROSITE-ProRule" id="PRU01182"/>
    </source>
</evidence>
<evidence type="ECO:0000305" key="2"/>
<feature type="chain" id="PRO_0000190691" description="UPF0758 protein CA_C1241">
    <location>
        <begin position="1"/>
        <end position="229"/>
    </location>
</feature>
<feature type="domain" description="MPN" evidence="1">
    <location>
        <begin position="107"/>
        <end position="229"/>
    </location>
</feature>
<feature type="short sequence motif" description="JAMM motif" evidence="1">
    <location>
        <begin position="178"/>
        <end position="191"/>
    </location>
</feature>
<feature type="binding site" evidence="1">
    <location>
        <position position="178"/>
    </location>
    <ligand>
        <name>Zn(2+)</name>
        <dbReference type="ChEBI" id="CHEBI:29105"/>
        <note>catalytic</note>
    </ligand>
</feature>
<feature type="binding site" evidence="1">
    <location>
        <position position="180"/>
    </location>
    <ligand>
        <name>Zn(2+)</name>
        <dbReference type="ChEBI" id="CHEBI:29105"/>
        <note>catalytic</note>
    </ligand>
</feature>
<feature type="binding site" evidence="1">
    <location>
        <position position="191"/>
    </location>
    <ligand>
        <name>Zn(2+)</name>
        <dbReference type="ChEBI" id="CHEBI:29105"/>
        <note>catalytic</note>
    </ligand>
</feature>
<sequence length="229" mass="25610">MINNSLKITDLPNNERPRERLLRYGSEVLSNSELLAIILRTGTLHENIINLSSRILKESGGLNGVLNLSFEELKKVKGIGNAKAVQILALGELFKRFKAYKSFESVKITSPKEAANLVMEQLRSFNKEHLYVIMLNTKNIVIKISDVSVGSLNSSIVHPREVYVEPILKHAASIILCHNHPSGDPKPSNEDLNITKRLYECSKFIGIELLDHIIIGDGIYISLKEEGLL</sequence>
<organism>
    <name type="scientific">Clostridium acetobutylicum (strain ATCC 824 / DSM 792 / JCM 1419 / IAM 19013 / LMG 5710 / NBRC 13948 / NRRL B-527 / VKM B-1787 / 2291 / W)</name>
    <dbReference type="NCBI Taxonomy" id="272562"/>
    <lineage>
        <taxon>Bacteria</taxon>
        <taxon>Bacillati</taxon>
        <taxon>Bacillota</taxon>
        <taxon>Clostridia</taxon>
        <taxon>Eubacteriales</taxon>
        <taxon>Clostridiaceae</taxon>
        <taxon>Clostridium</taxon>
    </lineage>
</organism>
<protein>
    <recommendedName>
        <fullName>UPF0758 protein CA_C1241</fullName>
    </recommendedName>
</protein>
<proteinExistence type="inferred from homology"/>
<dbReference type="EMBL" id="AE001437">
    <property type="protein sequence ID" value="AAK79213.1"/>
    <property type="molecule type" value="Genomic_DNA"/>
</dbReference>
<dbReference type="PIR" id="B97053">
    <property type="entry name" value="B97053"/>
</dbReference>
<dbReference type="RefSeq" id="NP_347873.1">
    <property type="nucleotide sequence ID" value="NC_003030.1"/>
</dbReference>
<dbReference type="SMR" id="Q97JN2"/>
<dbReference type="STRING" id="272562.CA_C1241"/>
<dbReference type="KEGG" id="cac:CA_C1241"/>
<dbReference type="PATRIC" id="fig|272562.8.peg.1441"/>
<dbReference type="eggNOG" id="COG2003">
    <property type="taxonomic scope" value="Bacteria"/>
</dbReference>
<dbReference type="HOGENOM" id="CLU_073529_0_2_9"/>
<dbReference type="OrthoDB" id="9804482at2"/>
<dbReference type="Proteomes" id="UP000000814">
    <property type="component" value="Chromosome"/>
</dbReference>
<dbReference type="GO" id="GO:0046872">
    <property type="term" value="F:metal ion binding"/>
    <property type="evidence" value="ECO:0007669"/>
    <property type="project" value="UniProtKB-KW"/>
</dbReference>
<dbReference type="GO" id="GO:0008237">
    <property type="term" value="F:metallopeptidase activity"/>
    <property type="evidence" value="ECO:0007669"/>
    <property type="project" value="UniProtKB-KW"/>
</dbReference>
<dbReference type="GO" id="GO:0006508">
    <property type="term" value="P:proteolysis"/>
    <property type="evidence" value="ECO:0007669"/>
    <property type="project" value="UniProtKB-KW"/>
</dbReference>
<dbReference type="CDD" id="cd08071">
    <property type="entry name" value="MPN_DUF2466"/>
    <property type="match status" value="1"/>
</dbReference>
<dbReference type="Gene3D" id="3.40.140.10">
    <property type="entry name" value="Cytidine Deaminase, domain 2"/>
    <property type="match status" value="1"/>
</dbReference>
<dbReference type="InterPro" id="IPR037518">
    <property type="entry name" value="MPN"/>
</dbReference>
<dbReference type="InterPro" id="IPR025657">
    <property type="entry name" value="RadC_JAB"/>
</dbReference>
<dbReference type="InterPro" id="IPR010994">
    <property type="entry name" value="RuvA_2-like"/>
</dbReference>
<dbReference type="InterPro" id="IPR001405">
    <property type="entry name" value="UPF0758"/>
</dbReference>
<dbReference type="InterPro" id="IPR020891">
    <property type="entry name" value="UPF0758_CS"/>
</dbReference>
<dbReference type="InterPro" id="IPR046778">
    <property type="entry name" value="UPF0758_N"/>
</dbReference>
<dbReference type="NCBIfam" id="NF000642">
    <property type="entry name" value="PRK00024.1"/>
    <property type="match status" value="1"/>
</dbReference>
<dbReference type="NCBIfam" id="TIGR00608">
    <property type="entry name" value="radc"/>
    <property type="match status" value="1"/>
</dbReference>
<dbReference type="PANTHER" id="PTHR30471">
    <property type="entry name" value="DNA REPAIR PROTEIN RADC"/>
    <property type="match status" value="1"/>
</dbReference>
<dbReference type="PANTHER" id="PTHR30471:SF3">
    <property type="entry name" value="UPF0758 PROTEIN YEES-RELATED"/>
    <property type="match status" value="1"/>
</dbReference>
<dbReference type="Pfam" id="PF04002">
    <property type="entry name" value="RadC"/>
    <property type="match status" value="1"/>
</dbReference>
<dbReference type="Pfam" id="PF20582">
    <property type="entry name" value="UPF0758_N"/>
    <property type="match status" value="1"/>
</dbReference>
<dbReference type="SUPFAM" id="SSF47781">
    <property type="entry name" value="RuvA domain 2-like"/>
    <property type="match status" value="1"/>
</dbReference>
<dbReference type="PROSITE" id="PS50249">
    <property type="entry name" value="MPN"/>
    <property type="match status" value="1"/>
</dbReference>
<dbReference type="PROSITE" id="PS01302">
    <property type="entry name" value="UPF0758"/>
    <property type="match status" value="1"/>
</dbReference>
<keyword id="KW-0378">Hydrolase</keyword>
<keyword id="KW-0479">Metal-binding</keyword>
<keyword id="KW-0482">Metalloprotease</keyword>
<keyword id="KW-0645">Protease</keyword>
<keyword id="KW-1185">Reference proteome</keyword>
<keyword id="KW-0862">Zinc</keyword>